<dbReference type="EMBL" id="BC106434">
    <property type="protein sequence ID" value="AAI06435.1"/>
    <property type="molecule type" value="mRNA"/>
</dbReference>
<dbReference type="RefSeq" id="NP_001090107.1">
    <property type="nucleotide sequence ID" value="NM_001096638.1"/>
</dbReference>
<dbReference type="SMR" id="Q3KQ10"/>
<dbReference type="DNASU" id="735182"/>
<dbReference type="GeneID" id="735182"/>
<dbReference type="KEGG" id="xla:735182"/>
<dbReference type="AGR" id="Xenbase:XB-GENE-966041"/>
<dbReference type="CTD" id="735182"/>
<dbReference type="Xenbase" id="XB-GENE-966041">
    <property type="gene designation" value="cenpm.L"/>
</dbReference>
<dbReference type="OrthoDB" id="2386686at2759"/>
<dbReference type="Proteomes" id="UP000186698">
    <property type="component" value="Chromosome 4L"/>
</dbReference>
<dbReference type="Bgee" id="735182">
    <property type="expression patterns" value="Expressed in egg cell and 19 other cell types or tissues"/>
</dbReference>
<dbReference type="GO" id="GO:0000775">
    <property type="term" value="C:chromosome, centromeric region"/>
    <property type="evidence" value="ECO:0007669"/>
    <property type="project" value="UniProtKB-SubCell"/>
</dbReference>
<dbReference type="GO" id="GO:0005634">
    <property type="term" value="C:nucleus"/>
    <property type="evidence" value="ECO:0007669"/>
    <property type="project" value="UniProtKB-SubCell"/>
</dbReference>
<dbReference type="Gene3D" id="3.40.50.300">
    <property type="entry name" value="P-loop containing nucleotide triphosphate hydrolases"/>
    <property type="match status" value="1"/>
</dbReference>
<dbReference type="InterPro" id="IPR020987">
    <property type="entry name" value="Centromere_Cenp-M"/>
</dbReference>
<dbReference type="InterPro" id="IPR027417">
    <property type="entry name" value="P-loop_NTPase"/>
</dbReference>
<dbReference type="PANTHER" id="PTHR34436">
    <property type="entry name" value="CENTROMERE PROTEIN M"/>
    <property type="match status" value="1"/>
</dbReference>
<dbReference type="PANTHER" id="PTHR34436:SF1">
    <property type="entry name" value="CENTROMERE PROTEIN M"/>
    <property type="match status" value="1"/>
</dbReference>
<dbReference type="Pfam" id="PF11111">
    <property type="entry name" value="CENP-M"/>
    <property type="match status" value="1"/>
</dbReference>
<sequence>MATVRPFDKMPMLNAAALLLVGTEESHREQLASAMLKEPKTFEVKIHMAQSLPLPYEREHLRPRFDMVVFLINLHSQLSLSTILASLTQLDVNFFLGKVCFVATGGGQVKHCMVDIATVKKLADTHLSTLLFSEFASEDDVTCTAQRLLQMLKICAGLVPGISALYLGSFMSSTLQTDQF</sequence>
<accession>Q3KQ10</accession>
<gene>
    <name type="primary">cenpm</name>
</gene>
<keyword id="KW-0137">Centromere</keyword>
<keyword id="KW-0158">Chromosome</keyword>
<keyword id="KW-0539">Nucleus</keyword>
<keyword id="KW-1185">Reference proteome</keyword>
<proteinExistence type="evidence at transcript level"/>
<comment type="function">
    <text evidence="1">Probable component of a centromeric complex involved in assembly of kinetochore proteins, mitotic progression and chromosome segregation.</text>
</comment>
<comment type="subcellular location">
    <subcellularLocation>
        <location evidence="1">Nucleus</location>
    </subcellularLocation>
    <subcellularLocation>
        <location evidence="1">Chromosome</location>
        <location evidence="1">Centromere</location>
    </subcellularLocation>
    <text evidence="1">Localizes exclusively in the centromeres.</text>
</comment>
<reference key="1">
    <citation type="submission" date="2005-10" db="EMBL/GenBank/DDBJ databases">
        <authorList>
            <consortium name="NIH - Xenopus Gene Collection (XGC) project"/>
        </authorList>
    </citation>
    <scope>NUCLEOTIDE SEQUENCE [LARGE SCALE MRNA]</scope>
    <source>
        <tissue>Testis</tissue>
    </source>
</reference>
<organism>
    <name type="scientific">Xenopus laevis</name>
    <name type="common">African clawed frog</name>
    <dbReference type="NCBI Taxonomy" id="8355"/>
    <lineage>
        <taxon>Eukaryota</taxon>
        <taxon>Metazoa</taxon>
        <taxon>Chordata</taxon>
        <taxon>Craniata</taxon>
        <taxon>Vertebrata</taxon>
        <taxon>Euteleostomi</taxon>
        <taxon>Amphibia</taxon>
        <taxon>Batrachia</taxon>
        <taxon>Anura</taxon>
        <taxon>Pipoidea</taxon>
        <taxon>Pipidae</taxon>
        <taxon>Xenopodinae</taxon>
        <taxon>Xenopus</taxon>
        <taxon>Xenopus</taxon>
    </lineage>
</organism>
<feature type="chain" id="PRO_0000249492" description="Centromere protein M">
    <location>
        <begin position="1"/>
        <end position="180"/>
    </location>
</feature>
<evidence type="ECO:0000250" key="1"/>
<name>CENPM_XENLA</name>
<protein>
    <recommendedName>
        <fullName>Centromere protein M</fullName>
        <shortName>CENP-M</shortName>
    </recommendedName>
</protein>